<proteinExistence type="inferred from homology"/>
<reference key="1">
    <citation type="journal article" date="2007" name="PLoS Genet.">
        <title>Patterns and implications of gene gain and loss in the evolution of Prochlorococcus.</title>
        <authorList>
            <person name="Kettler G.C."/>
            <person name="Martiny A.C."/>
            <person name="Huang K."/>
            <person name="Zucker J."/>
            <person name="Coleman M.L."/>
            <person name="Rodrigue S."/>
            <person name="Chen F."/>
            <person name="Lapidus A."/>
            <person name="Ferriera S."/>
            <person name="Johnson J."/>
            <person name="Steglich C."/>
            <person name="Church G.M."/>
            <person name="Richardson P."/>
            <person name="Chisholm S.W."/>
        </authorList>
    </citation>
    <scope>NUCLEOTIDE SEQUENCE [LARGE SCALE GENOMIC DNA]</scope>
    <source>
        <strain>MIT 9301</strain>
    </source>
</reference>
<comment type="function">
    <text evidence="1">Exhibits a very high intrinsic GTPase hydrolysis rate. Involved in the addition of a carboxymethylaminomethyl (cmnm) group at the wobble position (U34) of certain tRNAs, forming tRNA-cmnm(5)s(2)U34.</text>
</comment>
<comment type="cofactor">
    <cofactor evidence="1">
        <name>K(+)</name>
        <dbReference type="ChEBI" id="CHEBI:29103"/>
    </cofactor>
    <text evidence="1">Binds 1 potassium ion per subunit.</text>
</comment>
<comment type="subunit">
    <text evidence="1">Homodimer. Heterotetramer of two MnmE and two MnmG subunits.</text>
</comment>
<comment type="subcellular location">
    <subcellularLocation>
        <location evidence="1">Cytoplasm</location>
    </subcellularLocation>
</comment>
<comment type="similarity">
    <text evidence="1">Belongs to the TRAFAC class TrmE-Era-EngA-EngB-Septin-like GTPase superfamily. TrmE GTPase family.</text>
</comment>
<evidence type="ECO:0000255" key="1">
    <source>
        <dbReference type="HAMAP-Rule" id="MF_00379"/>
    </source>
</evidence>
<feature type="chain" id="PRO_1000048845" description="tRNA modification GTPase MnmE">
    <location>
        <begin position="1"/>
        <end position="460"/>
    </location>
</feature>
<feature type="domain" description="TrmE-type G">
    <location>
        <begin position="227"/>
        <end position="383"/>
    </location>
</feature>
<feature type="binding site" evidence="1">
    <location>
        <position position="29"/>
    </location>
    <ligand>
        <name>(6S)-5-formyl-5,6,7,8-tetrahydrofolate</name>
        <dbReference type="ChEBI" id="CHEBI:57457"/>
    </ligand>
</feature>
<feature type="binding site" evidence="1">
    <location>
        <position position="91"/>
    </location>
    <ligand>
        <name>(6S)-5-formyl-5,6,7,8-tetrahydrofolate</name>
        <dbReference type="ChEBI" id="CHEBI:57457"/>
    </ligand>
</feature>
<feature type="binding site" evidence="1">
    <location>
        <position position="132"/>
    </location>
    <ligand>
        <name>(6S)-5-formyl-5,6,7,8-tetrahydrofolate</name>
        <dbReference type="ChEBI" id="CHEBI:57457"/>
    </ligand>
</feature>
<feature type="binding site" evidence="1">
    <location>
        <begin position="237"/>
        <end position="242"/>
    </location>
    <ligand>
        <name>GTP</name>
        <dbReference type="ChEBI" id="CHEBI:37565"/>
    </ligand>
</feature>
<feature type="binding site" evidence="1">
    <location>
        <position position="237"/>
    </location>
    <ligand>
        <name>K(+)</name>
        <dbReference type="ChEBI" id="CHEBI:29103"/>
    </ligand>
</feature>
<feature type="binding site" evidence="1">
    <location>
        <position position="241"/>
    </location>
    <ligand>
        <name>Mg(2+)</name>
        <dbReference type="ChEBI" id="CHEBI:18420"/>
    </ligand>
</feature>
<feature type="binding site" evidence="1">
    <location>
        <begin position="256"/>
        <end position="262"/>
    </location>
    <ligand>
        <name>GTP</name>
        <dbReference type="ChEBI" id="CHEBI:37565"/>
    </ligand>
</feature>
<feature type="binding site" evidence="1">
    <location>
        <position position="256"/>
    </location>
    <ligand>
        <name>K(+)</name>
        <dbReference type="ChEBI" id="CHEBI:29103"/>
    </ligand>
</feature>
<feature type="binding site" evidence="1">
    <location>
        <position position="258"/>
    </location>
    <ligand>
        <name>K(+)</name>
        <dbReference type="ChEBI" id="CHEBI:29103"/>
    </ligand>
</feature>
<feature type="binding site" evidence="1">
    <location>
        <position position="261"/>
    </location>
    <ligand>
        <name>K(+)</name>
        <dbReference type="ChEBI" id="CHEBI:29103"/>
    </ligand>
</feature>
<feature type="binding site" evidence="1">
    <location>
        <position position="262"/>
    </location>
    <ligand>
        <name>Mg(2+)</name>
        <dbReference type="ChEBI" id="CHEBI:18420"/>
    </ligand>
</feature>
<feature type="binding site" evidence="1">
    <location>
        <begin position="281"/>
        <end position="284"/>
    </location>
    <ligand>
        <name>GTP</name>
        <dbReference type="ChEBI" id="CHEBI:37565"/>
    </ligand>
</feature>
<feature type="binding site" evidence="1">
    <location>
        <position position="460"/>
    </location>
    <ligand>
        <name>(6S)-5-formyl-5,6,7,8-tetrahydrofolate</name>
        <dbReference type="ChEBI" id="CHEBI:57457"/>
    </ligand>
</feature>
<sequence>MDSIVTTEDTIAAIASAISIGKGGVAIIRVSGKDAINSCKKIVQTKSKYAWESHRVFRGFIQENKQNKFIDEVLILVMKSPNSFTGEDVVELHCHGGIIIVNKVLKILLSSNSRVRIANPGEFSQRAFLNGKIDLTQAESINQLINASNTRSAELAFSGIQGEIKKKIDDIKNDLINQLCEIEARVDFEEDFTDFDYTKYLKNIKKVKEKIELLIENAKRNSYIHNGISIALIGKTNVGKSSLLNLLAKKEKAIVTNIPGTTRDVIEVNLTINDIPMKIIDTAGIRETYEQIESIGIKKSFGKIKESDFIIYIYSLEEGFNEEDKKIIQEIPKEKLITILGNKKDLIDCKNINSNELKNTILMSIKNNDGEKLLIDTIIKKCGLKQVENINIFLNERHQTNLSACLSNLNDTDEIIENKLPFDLLSIELRDGIQNLSKITGQELTEELLDNIFSKFCIGK</sequence>
<name>MNME_PROM0</name>
<protein>
    <recommendedName>
        <fullName evidence="1">tRNA modification GTPase MnmE</fullName>
        <ecNumber evidence="1">3.6.-.-</ecNumber>
    </recommendedName>
</protein>
<keyword id="KW-0963">Cytoplasm</keyword>
<keyword id="KW-0342">GTP-binding</keyword>
<keyword id="KW-0378">Hydrolase</keyword>
<keyword id="KW-0460">Magnesium</keyword>
<keyword id="KW-0479">Metal-binding</keyword>
<keyword id="KW-0547">Nucleotide-binding</keyword>
<keyword id="KW-0630">Potassium</keyword>
<keyword id="KW-1185">Reference proteome</keyword>
<keyword id="KW-0819">tRNA processing</keyword>
<gene>
    <name evidence="1" type="primary">mnmE</name>
    <name evidence="1" type="synonym">trmE</name>
    <name type="ordered locus">P9301_02091</name>
</gene>
<dbReference type="EC" id="3.6.-.-" evidence="1"/>
<dbReference type="EMBL" id="CP000576">
    <property type="protein sequence ID" value="ABO16832.1"/>
    <property type="molecule type" value="Genomic_DNA"/>
</dbReference>
<dbReference type="RefSeq" id="WP_011862234.1">
    <property type="nucleotide sequence ID" value="NC_009091.1"/>
</dbReference>
<dbReference type="SMR" id="A3PAQ7"/>
<dbReference type="STRING" id="167546.P9301_02091"/>
<dbReference type="KEGG" id="pmg:P9301_02091"/>
<dbReference type="eggNOG" id="COG0486">
    <property type="taxonomic scope" value="Bacteria"/>
</dbReference>
<dbReference type="HOGENOM" id="CLU_019624_4_1_3"/>
<dbReference type="OrthoDB" id="9805918at2"/>
<dbReference type="Proteomes" id="UP000001430">
    <property type="component" value="Chromosome"/>
</dbReference>
<dbReference type="GO" id="GO:0005829">
    <property type="term" value="C:cytosol"/>
    <property type="evidence" value="ECO:0007669"/>
    <property type="project" value="TreeGrafter"/>
</dbReference>
<dbReference type="GO" id="GO:0005525">
    <property type="term" value="F:GTP binding"/>
    <property type="evidence" value="ECO:0007669"/>
    <property type="project" value="UniProtKB-UniRule"/>
</dbReference>
<dbReference type="GO" id="GO:0003924">
    <property type="term" value="F:GTPase activity"/>
    <property type="evidence" value="ECO:0007669"/>
    <property type="project" value="UniProtKB-UniRule"/>
</dbReference>
<dbReference type="GO" id="GO:0046872">
    <property type="term" value="F:metal ion binding"/>
    <property type="evidence" value="ECO:0007669"/>
    <property type="project" value="UniProtKB-KW"/>
</dbReference>
<dbReference type="GO" id="GO:0030488">
    <property type="term" value="P:tRNA methylation"/>
    <property type="evidence" value="ECO:0007669"/>
    <property type="project" value="TreeGrafter"/>
</dbReference>
<dbReference type="GO" id="GO:0002098">
    <property type="term" value="P:tRNA wobble uridine modification"/>
    <property type="evidence" value="ECO:0007669"/>
    <property type="project" value="TreeGrafter"/>
</dbReference>
<dbReference type="CDD" id="cd04164">
    <property type="entry name" value="trmE"/>
    <property type="match status" value="1"/>
</dbReference>
<dbReference type="CDD" id="cd14858">
    <property type="entry name" value="TrmE_N"/>
    <property type="match status" value="1"/>
</dbReference>
<dbReference type="FunFam" id="3.30.1360.120:FF:000003">
    <property type="entry name" value="tRNA modification GTPase MnmE"/>
    <property type="match status" value="1"/>
</dbReference>
<dbReference type="Gene3D" id="3.40.50.300">
    <property type="entry name" value="P-loop containing nucleotide triphosphate hydrolases"/>
    <property type="match status" value="1"/>
</dbReference>
<dbReference type="Gene3D" id="3.30.1360.120">
    <property type="entry name" value="Probable tRNA modification gtpase trme, domain 1"/>
    <property type="match status" value="1"/>
</dbReference>
<dbReference type="Gene3D" id="1.20.120.430">
    <property type="entry name" value="tRNA modification GTPase MnmE domain 2"/>
    <property type="match status" value="1"/>
</dbReference>
<dbReference type="HAMAP" id="MF_00379">
    <property type="entry name" value="GTPase_MnmE"/>
    <property type="match status" value="1"/>
</dbReference>
<dbReference type="InterPro" id="IPR031168">
    <property type="entry name" value="G_TrmE"/>
</dbReference>
<dbReference type="InterPro" id="IPR006073">
    <property type="entry name" value="GTP-bd"/>
</dbReference>
<dbReference type="InterPro" id="IPR018948">
    <property type="entry name" value="GTP-bd_TrmE_N"/>
</dbReference>
<dbReference type="InterPro" id="IPR004520">
    <property type="entry name" value="GTPase_MnmE"/>
</dbReference>
<dbReference type="InterPro" id="IPR027368">
    <property type="entry name" value="MnmE_dom2"/>
</dbReference>
<dbReference type="InterPro" id="IPR025867">
    <property type="entry name" value="MnmE_helical"/>
</dbReference>
<dbReference type="InterPro" id="IPR027417">
    <property type="entry name" value="P-loop_NTPase"/>
</dbReference>
<dbReference type="InterPro" id="IPR005225">
    <property type="entry name" value="Small_GTP-bd"/>
</dbReference>
<dbReference type="InterPro" id="IPR027266">
    <property type="entry name" value="TrmE/GcvT_dom1"/>
</dbReference>
<dbReference type="NCBIfam" id="TIGR00450">
    <property type="entry name" value="mnmE_trmE_thdF"/>
    <property type="match status" value="1"/>
</dbReference>
<dbReference type="NCBIfam" id="NF003661">
    <property type="entry name" value="PRK05291.1-3"/>
    <property type="match status" value="1"/>
</dbReference>
<dbReference type="NCBIfam" id="TIGR00231">
    <property type="entry name" value="small_GTP"/>
    <property type="match status" value="1"/>
</dbReference>
<dbReference type="PANTHER" id="PTHR42714">
    <property type="entry name" value="TRNA MODIFICATION GTPASE GTPBP3"/>
    <property type="match status" value="1"/>
</dbReference>
<dbReference type="PANTHER" id="PTHR42714:SF2">
    <property type="entry name" value="TRNA MODIFICATION GTPASE GTPBP3, MITOCHONDRIAL"/>
    <property type="match status" value="1"/>
</dbReference>
<dbReference type="Pfam" id="PF01926">
    <property type="entry name" value="MMR_HSR1"/>
    <property type="match status" value="1"/>
</dbReference>
<dbReference type="Pfam" id="PF12631">
    <property type="entry name" value="MnmE_helical"/>
    <property type="match status" value="1"/>
</dbReference>
<dbReference type="Pfam" id="PF10396">
    <property type="entry name" value="TrmE_N"/>
    <property type="match status" value="1"/>
</dbReference>
<dbReference type="PRINTS" id="PR00449">
    <property type="entry name" value="RASTRNSFRMNG"/>
</dbReference>
<dbReference type="SUPFAM" id="SSF52540">
    <property type="entry name" value="P-loop containing nucleoside triphosphate hydrolases"/>
    <property type="match status" value="1"/>
</dbReference>
<dbReference type="SUPFAM" id="SSF116878">
    <property type="entry name" value="TrmE connector domain"/>
    <property type="match status" value="1"/>
</dbReference>
<dbReference type="PROSITE" id="PS51709">
    <property type="entry name" value="G_TRME"/>
    <property type="match status" value="1"/>
</dbReference>
<accession>A3PAQ7</accession>
<organism>
    <name type="scientific">Prochlorococcus marinus (strain MIT 9301)</name>
    <dbReference type="NCBI Taxonomy" id="167546"/>
    <lineage>
        <taxon>Bacteria</taxon>
        <taxon>Bacillati</taxon>
        <taxon>Cyanobacteriota</taxon>
        <taxon>Cyanophyceae</taxon>
        <taxon>Synechococcales</taxon>
        <taxon>Prochlorococcaceae</taxon>
        <taxon>Prochlorococcus</taxon>
    </lineage>
</organism>